<protein>
    <recommendedName>
        <fullName evidence="1">Phosphatidylserine decarboxylase proenzyme</fullName>
        <ecNumber evidence="1">4.1.1.65</ecNumber>
    </recommendedName>
    <component>
        <recommendedName>
            <fullName evidence="1">Phosphatidylserine decarboxylase alpha chain</fullName>
        </recommendedName>
    </component>
    <component>
        <recommendedName>
            <fullName evidence="1">Phosphatidylserine decarboxylase beta chain</fullName>
        </recommendedName>
    </component>
</protein>
<organism>
    <name type="scientific">Citrifermentans bemidjiense (strain ATCC BAA-1014 / DSM 16622 / JCM 12645 / Bem)</name>
    <name type="common">Geobacter bemidjiensis</name>
    <dbReference type="NCBI Taxonomy" id="404380"/>
    <lineage>
        <taxon>Bacteria</taxon>
        <taxon>Pseudomonadati</taxon>
        <taxon>Thermodesulfobacteriota</taxon>
        <taxon>Desulfuromonadia</taxon>
        <taxon>Geobacterales</taxon>
        <taxon>Geobacteraceae</taxon>
        <taxon>Citrifermentans</taxon>
    </lineage>
</organism>
<keyword id="KW-1003">Cell membrane</keyword>
<keyword id="KW-0210">Decarboxylase</keyword>
<keyword id="KW-0444">Lipid biosynthesis</keyword>
<keyword id="KW-0443">Lipid metabolism</keyword>
<keyword id="KW-0456">Lyase</keyword>
<keyword id="KW-0472">Membrane</keyword>
<keyword id="KW-0594">Phospholipid biosynthesis</keyword>
<keyword id="KW-1208">Phospholipid metabolism</keyword>
<keyword id="KW-0670">Pyruvate</keyword>
<keyword id="KW-1185">Reference proteome</keyword>
<keyword id="KW-0865">Zymogen</keyword>
<comment type="function">
    <text evidence="1">Catalyzes the formation of phosphatidylethanolamine (PtdEtn) from phosphatidylserine (PtdSer).</text>
</comment>
<comment type="catalytic activity">
    <reaction evidence="1">
        <text>a 1,2-diacyl-sn-glycero-3-phospho-L-serine + H(+) = a 1,2-diacyl-sn-glycero-3-phosphoethanolamine + CO2</text>
        <dbReference type="Rhea" id="RHEA:20828"/>
        <dbReference type="ChEBI" id="CHEBI:15378"/>
        <dbReference type="ChEBI" id="CHEBI:16526"/>
        <dbReference type="ChEBI" id="CHEBI:57262"/>
        <dbReference type="ChEBI" id="CHEBI:64612"/>
        <dbReference type="EC" id="4.1.1.65"/>
    </reaction>
</comment>
<comment type="cofactor">
    <cofactor evidence="1">
        <name>pyruvate</name>
        <dbReference type="ChEBI" id="CHEBI:15361"/>
    </cofactor>
    <text evidence="1">Binds 1 pyruvoyl group covalently per subunit.</text>
</comment>
<comment type="pathway">
    <text evidence="1">Phospholipid metabolism; phosphatidylethanolamine biosynthesis; phosphatidylethanolamine from CDP-diacylglycerol: step 2/2.</text>
</comment>
<comment type="subunit">
    <text evidence="1">Heterodimer of a large membrane-associated beta subunit and a small pyruvoyl-containing alpha subunit.</text>
</comment>
<comment type="subcellular location">
    <subcellularLocation>
        <location evidence="1">Cell membrane</location>
        <topology evidence="1">Peripheral membrane protein</topology>
    </subcellularLocation>
</comment>
<comment type="PTM">
    <text evidence="1">Is synthesized initially as an inactive proenzyme. Formation of the active enzyme involves a self-maturation process in which the active site pyruvoyl group is generated from an internal serine residue via an autocatalytic post-translational modification. Two non-identical subunits are generated from the proenzyme in this reaction, and the pyruvate is formed at the N-terminus of the alpha chain, which is derived from the carboxyl end of the proenzyme. The post-translation cleavage follows an unusual pathway, termed non-hydrolytic serinolysis, in which the side chain hydroxyl group of the serine supplies its oxygen atom to form the C-terminus of the beta chain, while the remainder of the serine residue undergoes an oxidative deamination to produce ammonia and the pyruvoyl prosthetic group on the alpha chain.</text>
</comment>
<comment type="similarity">
    <text evidence="1">Belongs to the phosphatidylserine decarboxylase family. PSD-A subfamily.</text>
</comment>
<proteinExistence type="inferred from homology"/>
<accession>B5EHU9</accession>
<feature type="chain" id="PRO_1000131466" description="Phosphatidylserine decarboxylase beta chain" evidence="1">
    <location>
        <begin position="1"/>
        <end position="187"/>
    </location>
</feature>
<feature type="chain" id="PRO_1000131467" description="Phosphatidylserine decarboxylase alpha chain" evidence="1">
    <location>
        <begin position="188"/>
        <end position="219"/>
    </location>
</feature>
<feature type="active site" description="Schiff-base intermediate with substrate; via pyruvic acid" evidence="1">
    <location>
        <position position="188"/>
    </location>
</feature>
<feature type="site" description="Cleavage (non-hydrolytic); by autocatalysis" evidence="1">
    <location>
        <begin position="187"/>
        <end position="188"/>
    </location>
</feature>
<feature type="modified residue" description="Pyruvic acid (Ser); by autocatalysis" evidence="1">
    <location>
        <position position="188"/>
    </location>
</feature>
<gene>
    <name evidence="1" type="primary">psd</name>
    <name type="ordered locus">Gbem_2744</name>
</gene>
<reference key="1">
    <citation type="submission" date="2008-07" db="EMBL/GenBank/DDBJ databases">
        <title>Complete sequence of Geobacter bemidjiensis BEM.</title>
        <authorList>
            <consortium name="US DOE Joint Genome Institute"/>
            <person name="Lucas S."/>
            <person name="Copeland A."/>
            <person name="Lapidus A."/>
            <person name="Glavina del Rio T."/>
            <person name="Dalin E."/>
            <person name="Tice H."/>
            <person name="Bruce D."/>
            <person name="Goodwin L."/>
            <person name="Pitluck S."/>
            <person name="Kiss H."/>
            <person name="Brettin T."/>
            <person name="Detter J.C."/>
            <person name="Han C."/>
            <person name="Kuske C.R."/>
            <person name="Schmutz J."/>
            <person name="Larimer F."/>
            <person name="Land M."/>
            <person name="Hauser L."/>
            <person name="Kyrpides N."/>
            <person name="Lykidis A."/>
            <person name="Lovley D."/>
            <person name="Richardson P."/>
        </authorList>
    </citation>
    <scope>NUCLEOTIDE SEQUENCE [LARGE SCALE GENOMIC DNA]</scope>
    <source>
        <strain>ATCC BAA-1014 / DSM 16622 / JCM 12645 / Bem</strain>
    </source>
</reference>
<name>PSD_CITBB</name>
<sequence length="219" mass="23960">MRNTDTPIAVEGYPFIAGFAAATLLLALLGQFLHCGFFVPATLFFVLTVFTVFFFRNPERATPGDENTVVAPADGEVIFLGKVIEPHTNGEFEKISIFMSVFNVHVNRAPISGKVVDGFYTKGKFFDVRDERASFENEQQGLVLETAAGLRMVVVQVAGLIARRIVCYAKTGDSLSRGRRYGLIRFGSRLDIYLPLGTSIDVVMGQKTVAGETVLGILP</sequence>
<dbReference type="EC" id="4.1.1.65" evidence="1"/>
<dbReference type="EMBL" id="CP001124">
    <property type="protein sequence ID" value="ACH39748.1"/>
    <property type="molecule type" value="Genomic_DNA"/>
</dbReference>
<dbReference type="RefSeq" id="WP_012531174.1">
    <property type="nucleotide sequence ID" value="NC_011146.1"/>
</dbReference>
<dbReference type="STRING" id="404380.Gbem_2744"/>
<dbReference type="KEGG" id="gbm:Gbem_2744"/>
<dbReference type="eggNOG" id="COG0688">
    <property type="taxonomic scope" value="Bacteria"/>
</dbReference>
<dbReference type="HOGENOM" id="CLU_072492_0_0_7"/>
<dbReference type="OrthoDB" id="9790893at2"/>
<dbReference type="UniPathway" id="UPA00558">
    <property type="reaction ID" value="UER00616"/>
</dbReference>
<dbReference type="Proteomes" id="UP000008825">
    <property type="component" value="Chromosome"/>
</dbReference>
<dbReference type="GO" id="GO:0005886">
    <property type="term" value="C:plasma membrane"/>
    <property type="evidence" value="ECO:0007669"/>
    <property type="project" value="UniProtKB-SubCell"/>
</dbReference>
<dbReference type="GO" id="GO:0004609">
    <property type="term" value="F:phosphatidylserine decarboxylase activity"/>
    <property type="evidence" value="ECO:0007669"/>
    <property type="project" value="UniProtKB-UniRule"/>
</dbReference>
<dbReference type="GO" id="GO:0006646">
    <property type="term" value="P:phosphatidylethanolamine biosynthetic process"/>
    <property type="evidence" value="ECO:0007669"/>
    <property type="project" value="UniProtKB-UniRule"/>
</dbReference>
<dbReference type="HAMAP" id="MF_00664">
    <property type="entry name" value="PS_decarb_PSD_A"/>
    <property type="match status" value="1"/>
</dbReference>
<dbReference type="InterPro" id="IPR003817">
    <property type="entry name" value="PS_Dcarbxylase"/>
</dbReference>
<dbReference type="InterPro" id="IPR033175">
    <property type="entry name" value="PSD-A"/>
</dbReference>
<dbReference type="NCBIfam" id="NF003678">
    <property type="entry name" value="PRK05305.1-2"/>
    <property type="match status" value="1"/>
</dbReference>
<dbReference type="NCBIfam" id="NF003685">
    <property type="entry name" value="PRK05305.2-5"/>
    <property type="match status" value="1"/>
</dbReference>
<dbReference type="PANTHER" id="PTHR35809">
    <property type="entry name" value="ARCHAETIDYLSERINE DECARBOXYLASE PROENZYME-RELATED"/>
    <property type="match status" value="1"/>
</dbReference>
<dbReference type="PANTHER" id="PTHR35809:SF1">
    <property type="entry name" value="ARCHAETIDYLSERINE DECARBOXYLASE PROENZYME-RELATED"/>
    <property type="match status" value="1"/>
</dbReference>
<dbReference type="Pfam" id="PF02666">
    <property type="entry name" value="PS_Dcarbxylase"/>
    <property type="match status" value="1"/>
</dbReference>
<evidence type="ECO:0000255" key="1">
    <source>
        <dbReference type="HAMAP-Rule" id="MF_00664"/>
    </source>
</evidence>